<evidence type="ECO:0000255" key="1">
    <source>
        <dbReference type="HAMAP-Rule" id="MF_01318"/>
    </source>
</evidence>
<evidence type="ECO:0000305" key="2"/>
<name>RL1_BACAH</name>
<reference key="1">
    <citation type="journal article" date="2007" name="J. Bacteriol.">
        <title>The complete genome sequence of Bacillus thuringiensis Al Hakam.</title>
        <authorList>
            <person name="Challacombe J.F."/>
            <person name="Altherr M.R."/>
            <person name="Xie G."/>
            <person name="Bhotika S.S."/>
            <person name="Brown N."/>
            <person name="Bruce D."/>
            <person name="Campbell C.S."/>
            <person name="Campbell M.L."/>
            <person name="Chen J."/>
            <person name="Chertkov O."/>
            <person name="Cleland C."/>
            <person name="Dimitrijevic M."/>
            <person name="Doggett N.A."/>
            <person name="Fawcett J.J."/>
            <person name="Glavina T."/>
            <person name="Goodwin L.A."/>
            <person name="Green L.D."/>
            <person name="Han C.S."/>
            <person name="Hill K.K."/>
            <person name="Hitchcock P."/>
            <person name="Jackson P.J."/>
            <person name="Keim P."/>
            <person name="Kewalramani A.R."/>
            <person name="Longmire J."/>
            <person name="Lucas S."/>
            <person name="Malfatti S."/>
            <person name="Martinez D."/>
            <person name="McMurry K."/>
            <person name="Meincke L.J."/>
            <person name="Misra M."/>
            <person name="Moseman B.L."/>
            <person name="Mundt M."/>
            <person name="Munk A.C."/>
            <person name="Okinaka R.T."/>
            <person name="Parson-Quintana B."/>
            <person name="Reilly L.P."/>
            <person name="Richardson P."/>
            <person name="Robinson D.L."/>
            <person name="Saunders E."/>
            <person name="Tapia R."/>
            <person name="Tesmer J.G."/>
            <person name="Thayer N."/>
            <person name="Thompson L.S."/>
            <person name="Tice H."/>
            <person name="Ticknor L.O."/>
            <person name="Wills P.L."/>
            <person name="Gilna P."/>
            <person name="Brettin T.S."/>
        </authorList>
    </citation>
    <scope>NUCLEOTIDE SEQUENCE [LARGE SCALE GENOMIC DNA]</scope>
    <source>
        <strain>Al Hakam</strain>
    </source>
</reference>
<proteinExistence type="inferred from homology"/>
<gene>
    <name evidence="1" type="primary">rplA</name>
    <name type="ordered locus">BALH_0096</name>
</gene>
<accession>A0R8G8</accession>
<dbReference type="EMBL" id="CP000485">
    <property type="protein sequence ID" value="ABK83511.1"/>
    <property type="status" value="ALT_INIT"/>
    <property type="molecule type" value="Genomic_DNA"/>
</dbReference>
<dbReference type="RefSeq" id="WP_002020168.1">
    <property type="nucleotide sequence ID" value="NC_008600.1"/>
</dbReference>
<dbReference type="SMR" id="A0R8G8"/>
<dbReference type="GeneID" id="93010955"/>
<dbReference type="KEGG" id="btl:BALH_0096"/>
<dbReference type="HOGENOM" id="CLU_062853_0_0_9"/>
<dbReference type="GO" id="GO:0015934">
    <property type="term" value="C:large ribosomal subunit"/>
    <property type="evidence" value="ECO:0007669"/>
    <property type="project" value="InterPro"/>
</dbReference>
<dbReference type="GO" id="GO:0019843">
    <property type="term" value="F:rRNA binding"/>
    <property type="evidence" value="ECO:0007669"/>
    <property type="project" value="UniProtKB-UniRule"/>
</dbReference>
<dbReference type="GO" id="GO:0003735">
    <property type="term" value="F:structural constituent of ribosome"/>
    <property type="evidence" value="ECO:0007669"/>
    <property type="project" value="InterPro"/>
</dbReference>
<dbReference type="GO" id="GO:0000049">
    <property type="term" value="F:tRNA binding"/>
    <property type="evidence" value="ECO:0007669"/>
    <property type="project" value="UniProtKB-KW"/>
</dbReference>
<dbReference type="GO" id="GO:0006417">
    <property type="term" value="P:regulation of translation"/>
    <property type="evidence" value="ECO:0007669"/>
    <property type="project" value="UniProtKB-KW"/>
</dbReference>
<dbReference type="GO" id="GO:0006412">
    <property type="term" value="P:translation"/>
    <property type="evidence" value="ECO:0007669"/>
    <property type="project" value="UniProtKB-UniRule"/>
</dbReference>
<dbReference type="CDD" id="cd00403">
    <property type="entry name" value="Ribosomal_L1"/>
    <property type="match status" value="1"/>
</dbReference>
<dbReference type="FunFam" id="3.40.50.790:FF:000001">
    <property type="entry name" value="50S ribosomal protein L1"/>
    <property type="match status" value="1"/>
</dbReference>
<dbReference type="Gene3D" id="3.30.190.20">
    <property type="match status" value="1"/>
</dbReference>
<dbReference type="Gene3D" id="3.40.50.790">
    <property type="match status" value="1"/>
</dbReference>
<dbReference type="HAMAP" id="MF_01318_B">
    <property type="entry name" value="Ribosomal_uL1_B"/>
    <property type="match status" value="1"/>
</dbReference>
<dbReference type="InterPro" id="IPR005878">
    <property type="entry name" value="Ribosom_uL1_bac-type"/>
</dbReference>
<dbReference type="InterPro" id="IPR002143">
    <property type="entry name" value="Ribosomal_uL1"/>
</dbReference>
<dbReference type="InterPro" id="IPR023674">
    <property type="entry name" value="Ribosomal_uL1-like"/>
</dbReference>
<dbReference type="InterPro" id="IPR028364">
    <property type="entry name" value="Ribosomal_uL1/biogenesis"/>
</dbReference>
<dbReference type="InterPro" id="IPR016095">
    <property type="entry name" value="Ribosomal_uL1_3-a/b-sand"/>
</dbReference>
<dbReference type="InterPro" id="IPR023673">
    <property type="entry name" value="Ribosomal_uL1_CS"/>
</dbReference>
<dbReference type="NCBIfam" id="TIGR01169">
    <property type="entry name" value="rplA_bact"/>
    <property type="match status" value="1"/>
</dbReference>
<dbReference type="PANTHER" id="PTHR36427">
    <property type="entry name" value="54S RIBOSOMAL PROTEIN L1, MITOCHONDRIAL"/>
    <property type="match status" value="1"/>
</dbReference>
<dbReference type="PANTHER" id="PTHR36427:SF3">
    <property type="entry name" value="LARGE RIBOSOMAL SUBUNIT PROTEIN UL1M"/>
    <property type="match status" value="1"/>
</dbReference>
<dbReference type="Pfam" id="PF00687">
    <property type="entry name" value="Ribosomal_L1"/>
    <property type="match status" value="1"/>
</dbReference>
<dbReference type="PIRSF" id="PIRSF002155">
    <property type="entry name" value="Ribosomal_L1"/>
    <property type="match status" value="1"/>
</dbReference>
<dbReference type="SUPFAM" id="SSF56808">
    <property type="entry name" value="Ribosomal protein L1"/>
    <property type="match status" value="1"/>
</dbReference>
<dbReference type="PROSITE" id="PS01199">
    <property type="entry name" value="RIBOSOMAL_L1"/>
    <property type="match status" value="1"/>
</dbReference>
<keyword id="KW-0678">Repressor</keyword>
<keyword id="KW-0687">Ribonucleoprotein</keyword>
<keyword id="KW-0689">Ribosomal protein</keyword>
<keyword id="KW-0694">RNA-binding</keyword>
<keyword id="KW-0699">rRNA-binding</keyword>
<keyword id="KW-0810">Translation regulation</keyword>
<keyword id="KW-0820">tRNA-binding</keyword>
<feature type="chain" id="PRO_0000307650" description="Large ribosomal subunit protein uL1">
    <location>
        <begin position="1"/>
        <end position="230"/>
    </location>
</feature>
<comment type="function">
    <text evidence="1">Binds directly to 23S rRNA. The L1 stalk is quite mobile in the ribosome, and is involved in E site tRNA release.</text>
</comment>
<comment type="function">
    <text evidence="1">Protein L1 is also a translational repressor protein, it controls the translation of the L11 operon by binding to its mRNA.</text>
</comment>
<comment type="subunit">
    <text evidence="1">Part of the 50S ribosomal subunit.</text>
</comment>
<comment type="similarity">
    <text evidence="1">Belongs to the universal ribosomal protein uL1 family.</text>
</comment>
<comment type="sequence caution" evidence="2">
    <conflict type="erroneous initiation">
        <sequence resource="EMBL-CDS" id="ABK83511"/>
    </conflict>
</comment>
<protein>
    <recommendedName>
        <fullName evidence="1">Large ribosomal subunit protein uL1</fullName>
    </recommendedName>
    <alternativeName>
        <fullName evidence="2">50S ribosomal protein L1</fullName>
    </alternativeName>
</protein>
<sequence>MAKRGKKYVEAAKLVDRAAAYSATEAVELVKKTNTAKFDATVEAAFRLGVDPKKADQQIRGAVVLPHGTGKVQRVLVFAKGEKAKEAEAAGADFVGDADYIGKIQQGWFDFDVVVATPDMMGEVGKLGRVLGPKGLMPNPKTGTVTFDVTKAVNEIKAGKVEYRVDKAGNIHVPIGKVSFEDAKLVENFRTIADTLQKVKPAAAKGTYMKNVTVASTMGPGVRVDVSTLA</sequence>
<organism>
    <name type="scientific">Bacillus thuringiensis (strain Al Hakam)</name>
    <dbReference type="NCBI Taxonomy" id="412694"/>
    <lineage>
        <taxon>Bacteria</taxon>
        <taxon>Bacillati</taxon>
        <taxon>Bacillota</taxon>
        <taxon>Bacilli</taxon>
        <taxon>Bacillales</taxon>
        <taxon>Bacillaceae</taxon>
        <taxon>Bacillus</taxon>
        <taxon>Bacillus cereus group</taxon>
    </lineage>
</organism>